<gene>
    <name evidence="1" type="primary">ctaB</name>
    <name type="ordered locus">Pars_0590</name>
</gene>
<proteinExistence type="inferred from homology"/>
<name>COXX_PYRAR</name>
<protein>
    <recommendedName>
        <fullName evidence="1">Protoheme IX farnesyltransferase</fullName>
        <ecNumber evidence="1">2.5.1.141</ecNumber>
    </recommendedName>
    <alternativeName>
        <fullName evidence="1">Heme B farnesyltransferase</fullName>
    </alternativeName>
    <alternativeName>
        <fullName evidence="1">Heme O synthase</fullName>
    </alternativeName>
</protein>
<keyword id="KW-1003">Cell membrane</keyword>
<keyword id="KW-0350">Heme biosynthesis</keyword>
<keyword id="KW-0472">Membrane</keyword>
<keyword id="KW-0808">Transferase</keyword>
<keyword id="KW-0812">Transmembrane</keyword>
<keyword id="KW-1133">Transmembrane helix</keyword>
<feature type="chain" id="PRO_0000346091" description="Protoheme IX farnesyltransferase">
    <location>
        <begin position="1"/>
        <end position="279"/>
    </location>
</feature>
<feature type="transmembrane region" description="Helical" evidence="1">
    <location>
        <begin position="5"/>
        <end position="25"/>
    </location>
</feature>
<feature type="transmembrane region" description="Helical" evidence="1">
    <location>
        <begin position="33"/>
        <end position="53"/>
    </location>
</feature>
<feature type="transmembrane region" description="Helical" evidence="1">
    <location>
        <begin position="84"/>
        <end position="103"/>
    </location>
</feature>
<feature type="transmembrane region" description="Helical" evidence="1">
    <location>
        <begin position="108"/>
        <end position="125"/>
    </location>
</feature>
<feature type="transmembrane region" description="Helical" evidence="1">
    <location>
        <begin position="133"/>
        <end position="153"/>
    </location>
</feature>
<feature type="transmembrane region" description="Helical" evidence="1">
    <location>
        <begin position="159"/>
        <end position="179"/>
    </location>
</feature>
<feature type="transmembrane region" description="Helical" evidence="1">
    <location>
        <begin position="201"/>
        <end position="221"/>
    </location>
</feature>
<feature type="transmembrane region" description="Helical" evidence="1">
    <location>
        <begin position="222"/>
        <end position="242"/>
    </location>
</feature>
<feature type="transmembrane region" description="Helical" evidence="1">
    <location>
        <begin position="256"/>
        <end position="276"/>
    </location>
</feature>
<sequence>MNPYLILLKPRVIWLLILASLAGYLYSARQPNIAQAFSLLLVAFLSTGGAAAFNHYWERDIDAAMRRTAKRPLPAGLVEPRNALAYSLVLSALGIALGFLLLGPLPGLFVFLGWFFYAVVYTVILKKRTWLNILGGGFAGNATFLGGYALGAGTVDLHAVLISFAIYLWIPSHIWALAYKYRDDYRRAGVPMLPTVVGEKAAVAIISLLNLASAAYIMTLYLAFGGGLLGGALVAAGVVATIATGAYALATKTDEAMWKMYKASSPVLTLFLLALIANA</sequence>
<reference key="1">
    <citation type="submission" date="2007-04" db="EMBL/GenBank/DDBJ databases">
        <title>Complete sequence of Pyrobaculum arsenaticum DSM 13514.</title>
        <authorList>
            <consortium name="US DOE Joint Genome Institute"/>
            <person name="Copeland A."/>
            <person name="Lucas S."/>
            <person name="Lapidus A."/>
            <person name="Barry K."/>
            <person name="Glavina del Rio T."/>
            <person name="Dalin E."/>
            <person name="Tice H."/>
            <person name="Pitluck S."/>
            <person name="Chain P."/>
            <person name="Malfatti S."/>
            <person name="Shin M."/>
            <person name="Vergez L."/>
            <person name="Schmutz J."/>
            <person name="Larimer F."/>
            <person name="Land M."/>
            <person name="Hauser L."/>
            <person name="Kyrpides N."/>
            <person name="Mikhailova N."/>
            <person name="Cozen A.E."/>
            <person name="Fitz-Gibbon S.T."/>
            <person name="House C.H."/>
            <person name="Saltikov C."/>
            <person name="Lowe T.M."/>
            <person name="Richardson P."/>
        </authorList>
    </citation>
    <scope>NUCLEOTIDE SEQUENCE [LARGE SCALE GENOMIC DNA]</scope>
    <source>
        <strain>ATCC 700994 / DSM 13514 / JCM 11321 / PZ6</strain>
    </source>
</reference>
<accession>A4WIG5</accession>
<dbReference type="EC" id="2.5.1.141" evidence="1"/>
<dbReference type="EMBL" id="CP000660">
    <property type="protein sequence ID" value="ABP50182.1"/>
    <property type="status" value="ALT_INIT"/>
    <property type="molecule type" value="Genomic_DNA"/>
</dbReference>
<dbReference type="SMR" id="A4WIG5"/>
<dbReference type="STRING" id="340102.Pars_0590"/>
<dbReference type="KEGG" id="pas:Pars_0590"/>
<dbReference type="HOGENOM" id="CLU_029631_0_1_2"/>
<dbReference type="OrthoDB" id="131615at2157"/>
<dbReference type="UniPathway" id="UPA00834">
    <property type="reaction ID" value="UER00712"/>
</dbReference>
<dbReference type="Proteomes" id="UP000001567">
    <property type="component" value="Chromosome"/>
</dbReference>
<dbReference type="GO" id="GO:0005886">
    <property type="term" value="C:plasma membrane"/>
    <property type="evidence" value="ECO:0007669"/>
    <property type="project" value="UniProtKB-SubCell"/>
</dbReference>
<dbReference type="GO" id="GO:0008495">
    <property type="term" value="F:protoheme IX farnesyltransferase activity"/>
    <property type="evidence" value="ECO:0007669"/>
    <property type="project" value="UniProtKB-UniRule"/>
</dbReference>
<dbReference type="GO" id="GO:0048034">
    <property type="term" value="P:heme O biosynthetic process"/>
    <property type="evidence" value="ECO:0007669"/>
    <property type="project" value="UniProtKB-UniRule"/>
</dbReference>
<dbReference type="CDD" id="cd13957">
    <property type="entry name" value="PT_UbiA_Cox10"/>
    <property type="match status" value="1"/>
</dbReference>
<dbReference type="Gene3D" id="1.10.357.140">
    <property type="entry name" value="UbiA prenyltransferase"/>
    <property type="match status" value="1"/>
</dbReference>
<dbReference type="HAMAP" id="MF_00154">
    <property type="entry name" value="CyoE_CtaB"/>
    <property type="match status" value="1"/>
</dbReference>
<dbReference type="InterPro" id="IPR006369">
    <property type="entry name" value="Protohaem_IX_farnesylTrfase"/>
</dbReference>
<dbReference type="InterPro" id="IPR000537">
    <property type="entry name" value="UbiA_prenyltransferase"/>
</dbReference>
<dbReference type="InterPro" id="IPR030470">
    <property type="entry name" value="UbiA_prenylTrfase_CS"/>
</dbReference>
<dbReference type="InterPro" id="IPR044878">
    <property type="entry name" value="UbiA_sf"/>
</dbReference>
<dbReference type="NCBIfam" id="TIGR01473">
    <property type="entry name" value="cyoE_ctaB"/>
    <property type="match status" value="1"/>
</dbReference>
<dbReference type="PANTHER" id="PTHR43448">
    <property type="entry name" value="PROTOHEME IX FARNESYLTRANSFERASE, MITOCHONDRIAL"/>
    <property type="match status" value="1"/>
</dbReference>
<dbReference type="PANTHER" id="PTHR43448:SF2">
    <property type="entry name" value="PROTOHEME IX FARNESYLTRANSFERASE, MITOCHONDRIAL"/>
    <property type="match status" value="1"/>
</dbReference>
<dbReference type="Pfam" id="PF01040">
    <property type="entry name" value="UbiA"/>
    <property type="match status" value="1"/>
</dbReference>
<dbReference type="PROSITE" id="PS00943">
    <property type="entry name" value="UBIA"/>
    <property type="match status" value="1"/>
</dbReference>
<evidence type="ECO:0000255" key="1">
    <source>
        <dbReference type="HAMAP-Rule" id="MF_00154"/>
    </source>
</evidence>
<evidence type="ECO:0000305" key="2"/>
<comment type="function">
    <text evidence="1">Converts heme B (protoheme IX) to heme O by substitution of the vinyl group on carbon 2 of heme B porphyrin ring with a hydroxyethyl farnesyl side group.</text>
</comment>
<comment type="catalytic activity">
    <reaction evidence="1">
        <text>heme b + (2E,6E)-farnesyl diphosphate + H2O = Fe(II)-heme o + diphosphate</text>
        <dbReference type="Rhea" id="RHEA:28070"/>
        <dbReference type="ChEBI" id="CHEBI:15377"/>
        <dbReference type="ChEBI" id="CHEBI:33019"/>
        <dbReference type="ChEBI" id="CHEBI:60344"/>
        <dbReference type="ChEBI" id="CHEBI:60530"/>
        <dbReference type="ChEBI" id="CHEBI:175763"/>
        <dbReference type="EC" id="2.5.1.141"/>
    </reaction>
</comment>
<comment type="pathway">
    <text evidence="1">Porphyrin-containing compound metabolism; heme O biosynthesis; heme O from protoheme: step 1/1.</text>
</comment>
<comment type="subcellular location">
    <subcellularLocation>
        <location evidence="1">Cell membrane</location>
        <topology evidence="1">Multi-pass membrane protein</topology>
    </subcellularLocation>
</comment>
<comment type="miscellaneous">
    <text evidence="1">Carbon 2 of the heme B porphyrin ring is defined according to the Fischer nomenclature.</text>
</comment>
<comment type="similarity">
    <text evidence="1">Belongs to the UbiA prenyltransferase family. Protoheme IX farnesyltransferase subfamily.</text>
</comment>
<comment type="sequence caution" evidence="2">
    <conflict type="erroneous initiation">
        <sequence resource="EMBL-CDS" id="ABP50182"/>
    </conflict>
</comment>
<organism>
    <name type="scientific">Pyrobaculum arsenaticum (strain DSM 13514 / JCM 11321 / PZ6)</name>
    <dbReference type="NCBI Taxonomy" id="340102"/>
    <lineage>
        <taxon>Archaea</taxon>
        <taxon>Thermoproteota</taxon>
        <taxon>Thermoprotei</taxon>
        <taxon>Thermoproteales</taxon>
        <taxon>Thermoproteaceae</taxon>
        <taxon>Pyrobaculum</taxon>
    </lineage>
</organism>